<organism>
    <name type="scientific">Homo sapiens</name>
    <name type="common">Human</name>
    <dbReference type="NCBI Taxonomy" id="9606"/>
    <lineage>
        <taxon>Eukaryota</taxon>
        <taxon>Metazoa</taxon>
        <taxon>Chordata</taxon>
        <taxon>Craniata</taxon>
        <taxon>Vertebrata</taxon>
        <taxon>Euteleostomi</taxon>
        <taxon>Mammalia</taxon>
        <taxon>Eutheria</taxon>
        <taxon>Euarchontoglires</taxon>
        <taxon>Primates</taxon>
        <taxon>Haplorrhini</taxon>
        <taxon>Catarrhini</taxon>
        <taxon>Hominidae</taxon>
        <taxon>Homo</taxon>
    </lineage>
</organism>
<reference key="1">
    <citation type="journal article" date="1995" name="Proc. Natl. Acad. Sci. U.S.A.">
        <title>The retinoblastoma protein binds to RIZ, a zinc-finger protein that shares an epitope with the adenovirus E1A protein.</title>
        <authorList>
            <person name="Buyse I.M."/>
            <person name="Shao G."/>
            <person name="Huang S."/>
        </authorList>
    </citation>
    <scope>NUCLEOTIDE SEQUENCE [MRNA] (ISOFORM 1)</scope>
    <scope>SUBCELLULAR LOCATION</scope>
    <source>
        <tissue>Fetal brain</tissue>
        <tissue>Retinoblastoma</tissue>
    </source>
</reference>
<reference key="2">
    <citation type="journal article" date="1997" name="J. Biol. Chem.">
        <title>The retinoblastoma interacting zinc finger gene RIZ produces a PR domain-lacking product through an internal promoter.</title>
        <authorList>
            <person name="Liu L."/>
            <person name="Shao G."/>
            <person name="Steele-Perkins G."/>
            <person name="Huang S."/>
        </authorList>
    </citation>
    <scope>NUCLEOTIDE SEQUENCE (ISOFORMS 1 AND 3)</scope>
    <scope>ALTERNATIVE INITIATION</scope>
    <scope>TISSUE SPECIFICITY</scope>
    <scope>SUBCELLULAR LOCATION</scope>
</reference>
<reference key="3">
    <citation type="journal article" date="2007" name="BMC Genomics">
        <title>The full-ORF clone resource of the German cDNA consortium.</title>
        <authorList>
            <person name="Bechtel S."/>
            <person name="Rosenfelder H."/>
            <person name="Duda A."/>
            <person name="Schmidt C.P."/>
            <person name="Ernst U."/>
            <person name="Wellenreuther R."/>
            <person name="Mehrle A."/>
            <person name="Schuster C."/>
            <person name="Bahr A."/>
            <person name="Bloecker H."/>
            <person name="Heubner D."/>
            <person name="Hoerlein A."/>
            <person name="Michel G."/>
            <person name="Wedler H."/>
            <person name="Koehrer K."/>
            <person name="Ottenwaelder B."/>
            <person name="Poustka A."/>
            <person name="Wiemann S."/>
            <person name="Schupp I."/>
        </authorList>
    </citation>
    <scope>NUCLEOTIDE SEQUENCE [LARGE SCALE MRNA] (ISOFORM 5)</scope>
    <source>
        <tissue>Retina</tissue>
    </source>
</reference>
<reference key="4">
    <citation type="journal article" date="2006" name="Nature">
        <title>The DNA sequence and biological annotation of human chromosome 1.</title>
        <authorList>
            <person name="Gregory S.G."/>
            <person name="Barlow K.F."/>
            <person name="McLay K.E."/>
            <person name="Kaul R."/>
            <person name="Swarbreck D."/>
            <person name="Dunham A."/>
            <person name="Scott C.E."/>
            <person name="Howe K.L."/>
            <person name="Woodfine K."/>
            <person name="Spencer C.C.A."/>
            <person name="Jones M.C."/>
            <person name="Gillson C."/>
            <person name="Searle S."/>
            <person name="Zhou Y."/>
            <person name="Kokocinski F."/>
            <person name="McDonald L."/>
            <person name="Evans R."/>
            <person name="Phillips K."/>
            <person name="Atkinson A."/>
            <person name="Cooper R."/>
            <person name="Jones C."/>
            <person name="Hall R.E."/>
            <person name="Andrews T.D."/>
            <person name="Lloyd C."/>
            <person name="Ainscough R."/>
            <person name="Almeida J.P."/>
            <person name="Ambrose K.D."/>
            <person name="Anderson F."/>
            <person name="Andrew R.W."/>
            <person name="Ashwell R.I.S."/>
            <person name="Aubin K."/>
            <person name="Babbage A.K."/>
            <person name="Bagguley C.L."/>
            <person name="Bailey J."/>
            <person name="Beasley H."/>
            <person name="Bethel G."/>
            <person name="Bird C.P."/>
            <person name="Bray-Allen S."/>
            <person name="Brown J.Y."/>
            <person name="Brown A.J."/>
            <person name="Buckley D."/>
            <person name="Burton J."/>
            <person name="Bye J."/>
            <person name="Carder C."/>
            <person name="Chapman J.C."/>
            <person name="Clark S.Y."/>
            <person name="Clarke G."/>
            <person name="Clee C."/>
            <person name="Cobley V."/>
            <person name="Collier R.E."/>
            <person name="Corby N."/>
            <person name="Coville G.J."/>
            <person name="Davies J."/>
            <person name="Deadman R."/>
            <person name="Dunn M."/>
            <person name="Earthrowl M."/>
            <person name="Ellington A.G."/>
            <person name="Errington H."/>
            <person name="Frankish A."/>
            <person name="Frankland J."/>
            <person name="French L."/>
            <person name="Garner P."/>
            <person name="Garnett J."/>
            <person name="Gay L."/>
            <person name="Ghori M.R.J."/>
            <person name="Gibson R."/>
            <person name="Gilby L.M."/>
            <person name="Gillett W."/>
            <person name="Glithero R.J."/>
            <person name="Grafham D.V."/>
            <person name="Griffiths C."/>
            <person name="Griffiths-Jones S."/>
            <person name="Grocock R."/>
            <person name="Hammond S."/>
            <person name="Harrison E.S.I."/>
            <person name="Hart E."/>
            <person name="Haugen E."/>
            <person name="Heath P.D."/>
            <person name="Holmes S."/>
            <person name="Holt K."/>
            <person name="Howden P.J."/>
            <person name="Hunt A.R."/>
            <person name="Hunt S.E."/>
            <person name="Hunter G."/>
            <person name="Isherwood J."/>
            <person name="James R."/>
            <person name="Johnson C."/>
            <person name="Johnson D."/>
            <person name="Joy A."/>
            <person name="Kay M."/>
            <person name="Kershaw J.K."/>
            <person name="Kibukawa M."/>
            <person name="Kimberley A.M."/>
            <person name="King A."/>
            <person name="Knights A.J."/>
            <person name="Lad H."/>
            <person name="Laird G."/>
            <person name="Lawlor S."/>
            <person name="Leongamornlert D.A."/>
            <person name="Lloyd D.M."/>
            <person name="Loveland J."/>
            <person name="Lovell J."/>
            <person name="Lush M.J."/>
            <person name="Lyne R."/>
            <person name="Martin S."/>
            <person name="Mashreghi-Mohammadi M."/>
            <person name="Matthews L."/>
            <person name="Matthews N.S.W."/>
            <person name="McLaren S."/>
            <person name="Milne S."/>
            <person name="Mistry S."/>
            <person name="Moore M.J.F."/>
            <person name="Nickerson T."/>
            <person name="O'Dell C.N."/>
            <person name="Oliver K."/>
            <person name="Palmeiri A."/>
            <person name="Palmer S.A."/>
            <person name="Parker A."/>
            <person name="Patel D."/>
            <person name="Pearce A.V."/>
            <person name="Peck A.I."/>
            <person name="Pelan S."/>
            <person name="Phelps K."/>
            <person name="Phillimore B.J."/>
            <person name="Plumb R."/>
            <person name="Rajan J."/>
            <person name="Raymond C."/>
            <person name="Rouse G."/>
            <person name="Saenphimmachak C."/>
            <person name="Sehra H.K."/>
            <person name="Sheridan E."/>
            <person name="Shownkeen R."/>
            <person name="Sims S."/>
            <person name="Skuce C.D."/>
            <person name="Smith M."/>
            <person name="Steward C."/>
            <person name="Subramanian S."/>
            <person name="Sycamore N."/>
            <person name="Tracey A."/>
            <person name="Tromans A."/>
            <person name="Van Helmond Z."/>
            <person name="Wall M."/>
            <person name="Wallis J.M."/>
            <person name="White S."/>
            <person name="Whitehead S.L."/>
            <person name="Wilkinson J.E."/>
            <person name="Willey D.L."/>
            <person name="Williams H."/>
            <person name="Wilming L."/>
            <person name="Wray P.W."/>
            <person name="Wu Z."/>
            <person name="Coulson A."/>
            <person name="Vaudin M."/>
            <person name="Sulston J.E."/>
            <person name="Durbin R.M."/>
            <person name="Hubbard T."/>
            <person name="Wooster R."/>
            <person name="Dunham I."/>
            <person name="Carter N.P."/>
            <person name="McVean G."/>
            <person name="Ross M.T."/>
            <person name="Harrow J."/>
            <person name="Olson M.V."/>
            <person name="Beck S."/>
            <person name="Rogers J."/>
            <person name="Bentley D.R."/>
        </authorList>
    </citation>
    <scope>NUCLEOTIDE SEQUENCE [LARGE SCALE GENOMIC DNA]</scope>
</reference>
<reference key="5">
    <citation type="journal article" date="2004" name="Genome Res.">
        <title>The status, quality, and expansion of the NIH full-length cDNA project: the Mammalian Gene Collection (MGC).</title>
        <authorList>
            <consortium name="The MGC Project Team"/>
        </authorList>
    </citation>
    <scope>NUCLEOTIDE SEQUENCE [LARGE SCALE MRNA] (ISOFORM 4)</scope>
</reference>
<reference key="6">
    <citation type="journal article" date="1995" name="Gene">
        <title>Identification and cloning of the G3B cDNA encoding a 3' segment of a protein binding to GATA-3.</title>
        <authorList>
            <person name="Shapiro V.S."/>
            <person name="Lee P."/>
            <person name="Winoto A."/>
        </authorList>
    </citation>
    <scope>NUCLEOTIDE SEQUENCE [MRNA] OF 159-550</scope>
    <scope>INTERACTION WITH GATA3</scope>
</reference>
<reference key="7">
    <citation type="journal article" date="1996" name="Eur. J. Biochem.">
        <title>cDNA cloning of a novel protein containing two zinc-finger domains that may function as a transcription factor for the human heme-oxygenase-1 gene.</title>
        <authorList>
            <person name="Muraosa Y."/>
            <person name="Takahashi K."/>
            <person name="Yoshizawa M."/>
            <person name="Shibahara S."/>
        </authorList>
    </citation>
    <scope>NUCLEOTIDE SEQUENCE [MRNA] OF 202-1718 (ISOFORM 2)</scope>
    <scope>TISSUE SPECIFICITY</scope>
</reference>
<reference key="8">
    <citation type="journal article" date="2003" name="Cancer Res.">
        <title>Inactivation of a histone methyltransferase by mutations in human cancers.</title>
        <authorList>
            <person name="Kim K.-C."/>
            <person name="Geng L."/>
            <person name="Huang S."/>
        </authorList>
    </citation>
    <scope>FUNCTION</scope>
    <scope>MUTAGENESIS OF CYS-106; ALA-159 AND ILE-188</scope>
    <scope>SUBCELLULAR LOCATION</scope>
</reference>
<reference key="9">
    <citation type="journal article" date="2008" name="Proc. Natl. Acad. Sci. U.S.A.">
        <title>A quantitative atlas of mitotic phosphorylation.</title>
        <authorList>
            <person name="Dephoure N."/>
            <person name="Zhou C."/>
            <person name="Villen J."/>
            <person name="Beausoleil S.A."/>
            <person name="Bakalarski C.E."/>
            <person name="Elledge S.J."/>
            <person name="Gygi S.P."/>
        </authorList>
    </citation>
    <scope>IDENTIFICATION BY MASS SPECTROMETRY [LARGE SCALE ANALYSIS]</scope>
    <source>
        <tissue>Cervix carcinoma</tissue>
    </source>
</reference>
<reference key="10">
    <citation type="journal article" date="2011" name="Sci. Signal.">
        <title>System-wide temporal characterization of the proteome and phosphoproteome of human embryonic stem cell differentiation.</title>
        <authorList>
            <person name="Rigbolt K.T."/>
            <person name="Prokhorova T.A."/>
            <person name="Akimov V."/>
            <person name="Henningsen J."/>
            <person name="Johansen P.T."/>
            <person name="Kratchmarova I."/>
            <person name="Kassem M."/>
            <person name="Mann M."/>
            <person name="Olsen J.V."/>
            <person name="Blagoev B."/>
        </authorList>
    </citation>
    <scope>IDENTIFICATION BY MASS SPECTROMETRY [LARGE SCALE ANALYSIS]</scope>
</reference>
<reference key="11">
    <citation type="journal article" date="2013" name="J. Proteome Res.">
        <title>Toward a comprehensive characterization of a human cancer cell phosphoproteome.</title>
        <authorList>
            <person name="Zhou H."/>
            <person name="Di Palma S."/>
            <person name="Preisinger C."/>
            <person name="Peng M."/>
            <person name="Polat A.N."/>
            <person name="Heck A.J."/>
            <person name="Mohammed S."/>
        </authorList>
    </citation>
    <scope>PHOSPHORYLATION [LARGE SCALE ANALYSIS] AT SER-421; SER-643; SER-743 AND SER-796</scope>
    <scope>IDENTIFICATION BY MASS SPECTROMETRY [LARGE SCALE ANALYSIS]</scope>
    <source>
        <tissue>Cervix carcinoma</tissue>
        <tissue>Erythroleukemia</tissue>
    </source>
</reference>
<reference key="12">
    <citation type="journal article" date="2014" name="J. Proteomics">
        <title>An enzyme assisted RP-RPLC approach for in-depth analysis of human liver phosphoproteome.</title>
        <authorList>
            <person name="Bian Y."/>
            <person name="Song C."/>
            <person name="Cheng K."/>
            <person name="Dong M."/>
            <person name="Wang F."/>
            <person name="Huang J."/>
            <person name="Sun D."/>
            <person name="Wang L."/>
            <person name="Ye M."/>
            <person name="Zou H."/>
        </authorList>
    </citation>
    <scope>IDENTIFICATION BY MASS SPECTROMETRY [LARGE SCALE ANALYSIS]</scope>
    <source>
        <tissue>Liver</tissue>
    </source>
</reference>
<reference key="13">
    <citation type="journal article" date="2015" name="Mol. Cell. Proteomics">
        <title>System-wide analysis of SUMOylation dynamics in response to replication stress reveals novel small ubiquitin-like modified target proteins and acceptor lysines relevant for genome stability.</title>
        <authorList>
            <person name="Xiao Z."/>
            <person name="Chang J.G."/>
            <person name="Hendriks I.A."/>
            <person name="Sigurdsson J.O."/>
            <person name="Olsen J.V."/>
            <person name="Vertegaal A.C."/>
        </authorList>
    </citation>
    <scope>SUMOYLATION [LARGE SCALE ANALYSIS] AT LYS-651 AND LYS-774</scope>
    <scope>IDENTIFICATION BY MASS SPECTROMETRY [LARGE SCALE ANALYSIS]</scope>
</reference>
<reference key="14">
    <citation type="journal article" date="2017" name="Nat. Struct. Mol. Biol.">
        <title>Site-specific mapping of the human SUMO proteome reveals co-modification with phosphorylation.</title>
        <authorList>
            <person name="Hendriks I.A."/>
            <person name="Lyon D."/>
            <person name="Young C."/>
            <person name="Jensen L.J."/>
            <person name="Vertegaal A.C."/>
            <person name="Nielsen M.L."/>
        </authorList>
    </citation>
    <scope>SUMOYLATION [LARGE SCALE ANALYSIS] AT LYS-347; LYS-651; LYS-690; LYS-692; LYS-774; LYS-866; LYS-879; LYS-1147; LYS-1151; LYS-1257 AND LYS-1281</scope>
    <scope>IDENTIFICATION BY MASS SPECTROMETRY [LARGE SCALE ANALYSIS]</scope>
</reference>
<reference key="15">
    <citation type="journal article" date="2008" name="Biochem. Biophys. Res. Commun.">
        <title>Structural studies of the SET domain from RIZ1 tumor suppressor.</title>
        <authorList>
            <person name="Briknarova K."/>
            <person name="Zhou X."/>
            <person name="Satterthwait A."/>
            <person name="Hoyt D.W."/>
            <person name="Ely K.R."/>
            <person name="Huang S."/>
        </authorList>
    </citation>
    <scope>STRUCTURE BY NMR OF 1-161</scope>
    <scope>INTERACTION WITH HISTONE H3</scope>
</reference>
<reference key="16">
    <citation type="journal article" date="2010" name="PLoS ONE">
        <title>Structural biology of human H3K9 methyltransferases.</title>
        <authorList>
            <person name="Wu H."/>
            <person name="Min J."/>
            <person name="Lunin V.V."/>
            <person name="Antoshenko T."/>
            <person name="Dombrovski L."/>
            <person name="Zeng H."/>
            <person name="Allali-Hassani A."/>
            <person name="Campagna-Slater V."/>
            <person name="Vedadi M."/>
            <person name="Arrowsmith C.H."/>
            <person name="Plotnikov A.N."/>
            <person name="Schapira M."/>
        </authorList>
    </citation>
    <scope>X-RAY CRYSTALLOGRAPHY (1.79 ANGSTROMS) OF 2-148</scope>
</reference>
<sequence>MNQNTTEPVAATETLAEVPEHVLRGLPEEVRLFPSAVDKTRIGVWATKPILKGKKFGPFVGDKKKRSQVKNNVYMWEVYYPNLGWMCIDATDPEKGNWLRYVNWACSGEEQNLFPLEINRAIYYKTLKPIAPGEELLVWYNGEDNPEIAAAIEEERASARSKRSSPKSRKGKKKSQENKNKGNKIQDIQLKTSEPDFTSANMRDSAEGPKEDEEKPSASALEQPATLQEVASQEVPPELATPAPAWEPQPEPDERLEAAACEVNDLGEEEEEEEEEDEEEEEDDDDDELEDEGEEEASMPNENSVKEPEIRCDEKPEDLLEEPKTTSEETLEDCSEVTPAMQIPRTKEEANGDVFETFMFPCQHCERKFTTKQGLERHMHIHISTVNHAFKCKYCGKAFGTQINRRRHERRHEAGLKRKPSQTLQPSEDLADGKASGENVASKDDSSPPSLGPDCLIMNSEKASQDTINSSVVEENGEVKELHPCKYCKKVFGTHTNMRRHQRRVHERHLIPKGVRRKGGLEEPQPPAEQAQATQNVYVPSTEPEEEGEADDVYIMDISSNISENLNYYIDGKIQTNNNTSNCDVIEMESASADLYGINCLLTPVTVEITQNIKTTQVPVTEDLPKEPLGSTNSEAKKRRTASPPALPKIKAETDSDPMVPSCSLSLPLSISTTEAVSFHKEKSVYLSSKLKQLLQTQDKLTPAGISATEIAKLGPVCVSAPASMLPVTSSRFKRRTSSPPSSPQHSPALRDFGKPSDGKAAWTDAGLTSKKSKLESHSDSPAWSLSGRDERETVSPPCFDEYKMSKEWTASSAFSSVCNQQPLDLSSGVKQKAEGTGKTPVQWESVLDLSVHKKHCSDSEGKEFKESHSVQPTCSAVKKRKPTTCMLQKVLLNEYNGIDLPVENPADGTRSPSPCKSLEAQPDPDLGPGSGFPAPTVESTPDVCPSSPALQTPSLSSGQLPPLLIPTDPSSPPPCPPVLTVATPPPPLLPTVPLPAPSSSASPHPCPSPLSNATAQSPLPILSPTVSPSPSPIPPVEPLMSAASPGPPTLSSSSSSSSSSSSFSSSSSSSSPSPPPLSAISSVVSSGDNLEASLPMISFKQEELENEGLKPREEPQSAAEQDVVVQETFNKNFVCNVCESPFLSIKDLTKHLSIHAEEWPFKCEFCVQLFKDKTDLSEHRFLLHGVGNIFVCSVCKKEFAFLCNLQQHQRDLHPDKVCTHHEFESGTLRPQNFTDPSKAHVEHMQSLPEDPLETSKEEEELNDSSEELYTTIKIMASGIKTKDPDVRLGLNQHYPSFKPPPFQYHHRNPMGIGVTATNFTTHNIPQTFTTAIRCTKCGKGVDNMPELHKHILACASASDKKRYTPKKNPVPLKQTVQPKNGVVVLDNSGKNAFRRMGQPKRLNFSVELSKMSSNKLKLNALKKKNQLVQKAILQKNKSAKQKADLKNACESSSHICPYCNREFTYIGSLNKHAAFSCPKKPLSPPKKKVSHSSKKGGHSSPASSDKNSNSNHRRRTADAEIKMQSMQTPLGKTRARSSGPTQVPLPSSSFRSKQNVKFAASVKSKKPSSSSLRNSSPIRMAKITHVEGKKPKAVAKNHSAQLSSKTSRSLHVRVQKSKAVLQSKSTLASKKRTDRFNIKSRERSGGPVTRSLQLAAAADLSENKREDGSAKQELKDFSYSLRLASRCSPPAAPYITRQYRKVKAPAAAQFQGPFFKE</sequence>
<name>PRDM2_HUMAN</name>
<keyword id="KW-0002">3D-structure</keyword>
<keyword id="KW-0010">Activator</keyword>
<keyword id="KW-0024">Alternative initiation</keyword>
<keyword id="KW-0025">Alternative splicing</keyword>
<keyword id="KW-0238">DNA-binding</keyword>
<keyword id="KW-1017">Isopeptide bond</keyword>
<keyword id="KW-0479">Metal-binding</keyword>
<keyword id="KW-0489">Methyltransferase</keyword>
<keyword id="KW-0539">Nucleus</keyword>
<keyword id="KW-0597">Phosphoprotein</keyword>
<keyword id="KW-1267">Proteomics identification</keyword>
<keyword id="KW-1185">Reference proteome</keyword>
<keyword id="KW-0677">Repeat</keyword>
<keyword id="KW-0949">S-adenosyl-L-methionine</keyword>
<keyword id="KW-0804">Transcription</keyword>
<keyword id="KW-0805">Transcription regulation</keyword>
<keyword id="KW-0808">Transferase</keyword>
<keyword id="KW-0832">Ubl conjugation</keyword>
<keyword id="KW-0862">Zinc</keyword>
<keyword id="KW-0863">Zinc-finger</keyword>
<protein>
    <recommendedName>
        <fullName>PR domain zinc finger protein 2</fullName>
        <ecNumber>2.1.1.355</ecNumber>
    </recommendedName>
    <alternativeName>
        <fullName>GATA-3-binding protein G3B</fullName>
    </alternativeName>
    <alternativeName>
        <fullName>Lysine N-methyltransferase 8</fullName>
    </alternativeName>
    <alternativeName>
        <fullName>MTB-ZF</fullName>
    </alternativeName>
    <alternativeName>
        <fullName>MTE-binding protein</fullName>
    </alternativeName>
    <alternativeName>
        <fullName>PR domain-containing protein 2</fullName>
    </alternativeName>
    <alternativeName>
        <fullName>Retinoblastoma protein-interacting zinc finger protein</fullName>
    </alternativeName>
    <alternativeName>
        <fullName>Zinc finger protein RIZ</fullName>
    </alternativeName>
</protein>
<feature type="chain" id="PRO_0000041634" description="PR domain zinc finger protein 2">
    <location>
        <begin position="1"/>
        <end position="1718"/>
    </location>
</feature>
<feature type="domain" description="SET" evidence="4">
    <location>
        <begin position="28"/>
        <end position="141"/>
    </location>
</feature>
<feature type="zinc finger region" description="C2H2-type 1" evidence="3">
    <location>
        <begin position="360"/>
        <end position="382"/>
    </location>
</feature>
<feature type="zinc finger region" description="C2H2-type 2" evidence="3">
    <location>
        <begin position="390"/>
        <end position="412"/>
    </location>
</feature>
<feature type="zinc finger region" description="C2H2-type 3" evidence="3">
    <location>
        <begin position="483"/>
        <end position="506"/>
    </location>
</feature>
<feature type="zinc finger region" description="C2H2-type 4" evidence="3">
    <location>
        <begin position="1134"/>
        <end position="1156"/>
    </location>
</feature>
<feature type="zinc finger region" description="C2H2-type 5" evidence="3">
    <location>
        <begin position="1162"/>
        <end position="1185"/>
    </location>
</feature>
<feature type="zinc finger region" description="C2H2-type 6" evidence="3">
    <location>
        <begin position="1191"/>
        <end position="1214"/>
    </location>
</feature>
<feature type="zinc finger region" description="C2H2-type 7; atypical" evidence="3">
    <location>
        <begin position="1333"/>
        <end position="1355"/>
    </location>
</feature>
<feature type="zinc finger region" description="C2H2-type 8; atypical" evidence="3">
    <location>
        <begin position="1455"/>
        <end position="1478"/>
    </location>
</feature>
<feature type="region of interest" description="Disordered" evidence="5">
    <location>
        <begin position="155"/>
        <end position="335"/>
    </location>
</feature>
<feature type="region of interest" description="Retinoblastoma protein binding">
    <location>
        <begin position="294"/>
        <end position="316"/>
    </location>
</feature>
<feature type="region of interest" description="Disordered" evidence="5">
    <location>
        <begin position="405"/>
        <end position="457"/>
    </location>
</feature>
<feature type="region of interest" description="Disordered" evidence="5">
    <location>
        <begin position="513"/>
        <end position="550"/>
    </location>
</feature>
<feature type="region of interest" description="Disordered" evidence="5">
    <location>
        <begin position="622"/>
        <end position="660"/>
    </location>
</feature>
<feature type="region of interest" description="Disordered" evidence="5">
    <location>
        <begin position="729"/>
        <end position="797"/>
    </location>
</feature>
<feature type="region of interest" description="Disordered" evidence="5">
    <location>
        <begin position="903"/>
        <end position="1083"/>
    </location>
</feature>
<feature type="region of interest" description="Disordered" evidence="5">
    <location>
        <begin position="1244"/>
        <end position="1265"/>
    </location>
</feature>
<feature type="region of interest" description="Disordered" evidence="5">
    <location>
        <begin position="1478"/>
        <end position="1576"/>
    </location>
</feature>
<feature type="region of interest" description="Disordered" evidence="5">
    <location>
        <begin position="1589"/>
        <end position="1612"/>
    </location>
</feature>
<feature type="region of interest" description="Disordered" evidence="5">
    <location>
        <begin position="1625"/>
        <end position="1652"/>
    </location>
</feature>
<feature type="short sequence motif" description="SH3-binding" evidence="2">
    <location>
        <begin position="970"/>
        <end position="979"/>
    </location>
</feature>
<feature type="short sequence motif" description="SH3-binding" evidence="2">
    <location>
        <begin position="985"/>
        <end position="998"/>
    </location>
</feature>
<feature type="short sequence motif" description="SH3-binding" evidence="2">
    <location>
        <begin position="1028"/>
        <end position="1052"/>
    </location>
</feature>
<feature type="compositionally biased region" description="Basic residues" evidence="5">
    <location>
        <begin position="159"/>
        <end position="173"/>
    </location>
</feature>
<feature type="compositionally biased region" description="Polar residues" evidence="5">
    <location>
        <begin position="189"/>
        <end position="202"/>
    </location>
</feature>
<feature type="compositionally biased region" description="Basic and acidic residues" evidence="5">
    <location>
        <begin position="204"/>
        <end position="216"/>
    </location>
</feature>
<feature type="compositionally biased region" description="Acidic residues" evidence="5">
    <location>
        <begin position="265"/>
        <end position="297"/>
    </location>
</feature>
<feature type="compositionally biased region" description="Basic and acidic residues" evidence="5">
    <location>
        <begin position="304"/>
        <end position="327"/>
    </location>
</feature>
<feature type="compositionally biased region" description="Low complexity" evidence="5">
    <location>
        <begin position="738"/>
        <end position="748"/>
    </location>
</feature>
<feature type="compositionally biased region" description="Low complexity" evidence="5">
    <location>
        <begin position="951"/>
        <end position="969"/>
    </location>
</feature>
<feature type="compositionally biased region" description="Pro residues" evidence="5">
    <location>
        <begin position="970"/>
        <end position="997"/>
    </location>
</feature>
<feature type="compositionally biased region" description="Low complexity" evidence="5">
    <location>
        <begin position="1018"/>
        <end position="1027"/>
    </location>
</feature>
<feature type="compositionally biased region" description="Pro residues" evidence="5">
    <location>
        <begin position="1028"/>
        <end position="1038"/>
    </location>
</feature>
<feature type="compositionally biased region" description="Low complexity" evidence="5">
    <location>
        <begin position="1042"/>
        <end position="1072"/>
    </location>
</feature>
<feature type="compositionally biased region" description="Acidic residues" evidence="5">
    <location>
        <begin position="1251"/>
        <end position="1265"/>
    </location>
</feature>
<feature type="compositionally biased region" description="Basic residues" evidence="5">
    <location>
        <begin position="1486"/>
        <end position="1498"/>
    </location>
</feature>
<feature type="compositionally biased region" description="Low complexity" evidence="5">
    <location>
        <begin position="1499"/>
        <end position="1511"/>
    </location>
</feature>
<feature type="compositionally biased region" description="Polar residues" evidence="5">
    <location>
        <begin position="1525"/>
        <end position="1556"/>
    </location>
</feature>
<feature type="compositionally biased region" description="Polar residues" evidence="5">
    <location>
        <begin position="1599"/>
        <end position="1608"/>
    </location>
</feature>
<feature type="compositionally biased region" description="Basic and acidic residues" evidence="5">
    <location>
        <begin position="1635"/>
        <end position="1645"/>
    </location>
</feature>
<feature type="modified residue" description="Phosphoserine" evidence="16">
    <location>
        <position position="421"/>
    </location>
</feature>
<feature type="modified residue" description="Phosphoserine" evidence="16">
    <location>
        <position position="643"/>
    </location>
</feature>
<feature type="modified residue" description="Phosphoserine" evidence="16">
    <location>
        <position position="743"/>
    </location>
</feature>
<feature type="modified residue" description="Phosphoserine" evidence="1">
    <location>
        <position position="781"/>
    </location>
</feature>
<feature type="modified residue" description="Phosphoserine" evidence="1">
    <location>
        <position position="785"/>
    </location>
</feature>
<feature type="modified residue" description="Phosphoserine" evidence="16">
    <location>
        <position position="796"/>
    </location>
</feature>
<feature type="cross-link" description="Glycyl lysine isopeptide (Lys-Gly) (interchain with G-Cter in SUMO2)" evidence="18">
    <location>
        <position position="347"/>
    </location>
</feature>
<feature type="cross-link" description="Glycyl lysine isopeptide (Lys-Gly) (interchain with G-Cter in SUMO2)" evidence="17 18">
    <location>
        <position position="651"/>
    </location>
</feature>
<feature type="cross-link" description="Glycyl lysine isopeptide (Lys-Gly) (interchain with G-Cter in SUMO2)" evidence="18">
    <location>
        <position position="690"/>
    </location>
</feature>
<feature type="cross-link" description="Glycyl lysine isopeptide (Lys-Gly) (interchain with G-Cter in SUMO2)" evidence="18">
    <location>
        <position position="692"/>
    </location>
</feature>
<feature type="cross-link" description="Glycyl lysine isopeptide (Lys-Gly) (interchain with G-Cter in SUMO2)" evidence="17 18">
    <location>
        <position position="774"/>
    </location>
</feature>
<feature type="cross-link" description="Glycyl lysine isopeptide (Lys-Gly) (interchain with G-Cter in SUMO2)" evidence="18">
    <location>
        <position position="866"/>
    </location>
</feature>
<feature type="cross-link" description="Glycyl lysine isopeptide (Lys-Gly) (interchain with G-Cter in SUMO2)" evidence="18">
    <location>
        <position position="879"/>
    </location>
</feature>
<feature type="cross-link" description="Glycyl lysine isopeptide (Lys-Gly) (interchain with G-Cter in SUMO2)" evidence="18">
    <location>
        <position position="1147"/>
    </location>
</feature>
<feature type="cross-link" description="Glycyl lysine isopeptide (Lys-Gly) (interchain with G-Cter in SUMO2)" evidence="18">
    <location>
        <position position="1151"/>
    </location>
</feature>
<feature type="cross-link" description="Glycyl lysine isopeptide (Lys-Gly) (interchain with G-Cter in SUMO2)" evidence="18">
    <location>
        <position position="1257"/>
    </location>
</feature>
<feature type="cross-link" description="Glycyl lysine isopeptide (Lys-Gly) (interchain with G-Cter in SUMO2)" evidence="18">
    <location>
        <position position="1281"/>
    </location>
</feature>
<feature type="splice variant" id="VSP_018974" description="In isoform 3 and isoform 5." evidence="13">
    <location>
        <begin position="1"/>
        <end position="201"/>
    </location>
</feature>
<feature type="splice variant" id="VSP_046421" description="In isoform 4." evidence="12">
    <original>GKKKSQENKNKGNKIQDIQLKTSEPDFTSANMRDSAEGPKEDEEKPSASALEQPAT</original>
    <variation>ATASAWRPDALHQRPRTSPGSIGRSKLQLQPSSRDHSSKSRHSGCSLTAPEVTWNQ</variation>
    <location>
        <begin position="171"/>
        <end position="226"/>
    </location>
</feature>
<feature type="splice variant" id="VSP_046422" description="In isoform 4." evidence="12">
    <location>
        <begin position="227"/>
        <end position="1718"/>
    </location>
</feature>
<feature type="splice variant" id="VSP_006927" description="In isoform 2 and isoform 5." evidence="13 14">
    <original>SYSL</original>
    <variation>RNFL</variation>
    <location>
        <begin position="1679"/>
        <end position="1682"/>
    </location>
</feature>
<feature type="splice variant" id="VSP_006928" description="In isoform 2 and isoform 5." evidence="13 14">
    <location>
        <begin position="1683"/>
        <end position="1718"/>
    </location>
</feature>
<feature type="sequence variant" id="VAR_052929" description="In dbSNP:rs2076324.">
    <original>D</original>
    <variation>E</variation>
    <location>
        <position position="283"/>
    </location>
</feature>
<feature type="sequence variant" id="VAR_052930" description="In dbSNP:rs17350795.">
    <original>S</original>
    <variation>N</variation>
    <location>
        <position position="450"/>
    </location>
</feature>
<feature type="mutagenesis site" description="Reduced histone methyltransferase activity." evidence="6">
    <original>C</original>
    <variation>Y</variation>
    <location>
        <position position="106"/>
    </location>
</feature>
<feature type="mutagenesis site" description="Reduced histone methyltransferase activity." evidence="6">
    <original>A</original>
    <variation>V</variation>
    <location>
        <position position="159"/>
    </location>
</feature>
<feature type="mutagenesis site" description="Loss of histone methyltransferase activity." evidence="6">
    <original>I</original>
    <variation>V</variation>
    <location>
        <position position="188"/>
    </location>
</feature>
<feature type="sequence conflict" description="In Ref. 6; AAA87023." evidence="15" ref="6">
    <original>S</original>
    <variation>T</variation>
    <location>
        <position position="164"/>
    </location>
</feature>
<feature type="sequence conflict" description="In Ref. 6; AAA87023." evidence="15" ref="6">
    <original>D</original>
    <variation>S</variation>
    <location>
        <position position="196"/>
    </location>
</feature>
<feature type="sequence conflict" description="In Ref. 6; AAA87023." evidence="15" ref="6">
    <original>A</original>
    <variation>G</variation>
    <location>
        <position position="200"/>
    </location>
</feature>
<feature type="sequence conflict" description="In Ref. 6; AAA87023." evidence="15" ref="6">
    <original>EDEEEEEDDDDDELEDEG</original>
    <variation>VGGGGGVVVVVSWKARGE</variation>
    <location>
        <begin position="276"/>
        <end position="293"/>
    </location>
</feature>
<feature type="sequence conflict" description="In Ref. 6; AAA87023." evidence="15" ref="6">
    <original>EPEIRCDEKPED</original>
    <variation>SQKYGVMRSQKI</variation>
    <location>
        <begin position="307"/>
        <end position="318"/>
    </location>
</feature>
<feature type="sequence conflict" description="In Ref. 6; AAA87023." evidence="15" ref="6">
    <original>EV</original>
    <variation>DL</variation>
    <location>
        <begin position="336"/>
        <end position="337"/>
    </location>
</feature>
<feature type="sequence conflict" description="In Ref. 6; AAA87023." evidence="15" ref="6">
    <original>T</original>
    <variation>I</variation>
    <location>
        <position position="371"/>
    </location>
</feature>
<feature type="sequence conflict" description="In Ref. 6; AAA87023." evidence="15" ref="6">
    <original>DT</original>
    <variation>VS</variation>
    <location>
        <begin position="466"/>
        <end position="467"/>
    </location>
</feature>
<feature type="sequence conflict" description="In Ref. 3; BX647310." evidence="15" ref="3">
    <original>Q</original>
    <variation>L</variation>
    <location>
        <position position="530"/>
    </location>
</feature>
<feature type="sequence conflict" description="In Ref. 6; AAA87023." evidence="15" ref="6">
    <original>TQNVYVPSTEPEEEGEA</original>
    <variation>PRTCMYQAQSRRGRGSR</variation>
    <location>
        <begin position="534"/>
        <end position="550"/>
    </location>
</feature>
<feature type="sequence conflict" description="In Ref. 1 and 7." evidence="15" ref="1 7">
    <original>P</original>
    <variation>PP</variation>
    <location>
        <position position="703"/>
    </location>
</feature>
<feature type="sequence conflict" description="In Ref. 3; BX647310." evidence="15" ref="3">
    <original>H</original>
    <variation>R</variation>
    <location>
        <position position="856"/>
    </location>
</feature>
<feature type="sequence conflict" description="In Ref. 3; BX647310." evidence="15" ref="3">
    <original>I</original>
    <variation>T</variation>
    <location>
        <position position="1456"/>
    </location>
</feature>
<feature type="strand" evidence="20">
    <location>
        <begin position="5"/>
        <end position="7"/>
    </location>
</feature>
<feature type="helix" evidence="20">
    <location>
        <begin position="15"/>
        <end position="17"/>
    </location>
</feature>
<feature type="helix" evidence="20">
    <location>
        <begin position="20"/>
        <end position="24"/>
    </location>
</feature>
<feature type="strand" evidence="19">
    <location>
        <begin position="27"/>
        <end position="29"/>
    </location>
</feature>
<feature type="strand" evidence="20">
    <location>
        <begin position="30"/>
        <end position="34"/>
    </location>
</feature>
<feature type="turn" evidence="19">
    <location>
        <begin position="36"/>
        <end position="39"/>
    </location>
</feature>
<feature type="strand" evidence="20">
    <location>
        <begin position="41"/>
        <end position="48"/>
    </location>
</feature>
<feature type="strand" evidence="19">
    <location>
        <begin position="54"/>
        <end position="59"/>
    </location>
</feature>
<feature type="strand" evidence="20">
    <location>
        <begin position="62"/>
        <end position="64"/>
    </location>
</feature>
<feature type="helix" evidence="20">
    <location>
        <begin position="66"/>
        <end position="68"/>
    </location>
</feature>
<feature type="strand" evidence="20">
    <location>
        <begin position="72"/>
        <end position="80"/>
    </location>
</feature>
<feature type="turn" evidence="20">
    <location>
        <begin position="81"/>
        <end position="83"/>
    </location>
</feature>
<feature type="strand" evidence="20">
    <location>
        <begin position="84"/>
        <end position="89"/>
    </location>
</feature>
<feature type="helix" evidence="20">
    <location>
        <begin position="93"/>
        <end position="95"/>
    </location>
</feature>
<feature type="helix" evidence="20">
    <location>
        <begin position="98"/>
        <end position="101"/>
    </location>
</feature>
<feature type="strand" evidence="19">
    <location>
        <begin position="106"/>
        <end position="110"/>
    </location>
</feature>
<feature type="strand" evidence="20">
    <location>
        <begin position="113"/>
        <end position="118"/>
    </location>
</feature>
<feature type="strand" evidence="20">
    <location>
        <begin position="121"/>
        <end position="128"/>
    </location>
</feature>
<feature type="helix" evidence="19">
    <location>
        <begin position="146"/>
        <end position="158"/>
    </location>
</feature>
<feature type="sequence conflict" description="In Ref. 5; BC014468." evidence="15" ref="5">
    <original>Q</original>
    <variation>R</variation>
    <location sequence="Q13029-4">
        <position position="198"/>
    </location>
</feature>
<dbReference type="EC" id="2.1.1.355"/>
<dbReference type="EMBL" id="U17838">
    <property type="protein sequence ID" value="AAC50820.2"/>
    <property type="molecule type" value="mRNA"/>
</dbReference>
<dbReference type="EMBL" id="BX647310">
    <property type="status" value="NOT_ANNOTATED_CDS"/>
    <property type="molecule type" value="mRNA"/>
</dbReference>
<dbReference type="EMBL" id="AL031277">
    <property type="status" value="NOT_ANNOTATED_CDS"/>
    <property type="molecule type" value="Genomic_DNA"/>
</dbReference>
<dbReference type="EMBL" id="AL583942">
    <property type="status" value="NOT_ANNOTATED_CDS"/>
    <property type="molecule type" value="Genomic_DNA"/>
</dbReference>
<dbReference type="EMBL" id="AL359771">
    <property type="status" value="NOT_ANNOTATED_CDS"/>
    <property type="molecule type" value="Genomic_DNA"/>
</dbReference>
<dbReference type="EMBL" id="BC014468">
    <property type="status" value="NOT_ANNOTATED_CDS"/>
    <property type="molecule type" value="mRNA"/>
</dbReference>
<dbReference type="EMBL" id="U23736">
    <property type="protein sequence ID" value="AAA87023.1"/>
    <property type="molecule type" value="mRNA"/>
</dbReference>
<dbReference type="EMBL" id="D45132">
    <property type="protein sequence ID" value="BAA08110.1"/>
    <property type="status" value="ALT_INIT"/>
    <property type="molecule type" value="mRNA"/>
</dbReference>
<dbReference type="CCDS" id="CCDS150.1">
    <molecule id="Q13029-1"/>
</dbReference>
<dbReference type="CCDS" id="CCDS30603.1">
    <molecule id="Q13029-5"/>
</dbReference>
<dbReference type="CCDS" id="CCDS44061.1">
    <molecule id="Q13029-4"/>
</dbReference>
<dbReference type="PIR" id="I38902">
    <property type="entry name" value="I38902"/>
</dbReference>
<dbReference type="RefSeq" id="NP_001007258.1">
    <molecule id="Q13029-5"/>
    <property type="nucleotide sequence ID" value="NM_001007257.3"/>
</dbReference>
<dbReference type="RefSeq" id="NP_001129082.1">
    <molecule id="Q13029-4"/>
    <property type="nucleotide sequence ID" value="NM_001135610.2"/>
</dbReference>
<dbReference type="RefSeq" id="NP_001380915.1">
    <molecule id="Q13029-1"/>
    <property type="nucleotide sequence ID" value="NM_001393986.1"/>
</dbReference>
<dbReference type="RefSeq" id="NP_001380916.1">
    <molecule id="Q13029-3"/>
    <property type="nucleotide sequence ID" value="NM_001393987.1"/>
</dbReference>
<dbReference type="RefSeq" id="NP_001380917.1">
    <molecule id="Q13029-5"/>
    <property type="nucleotide sequence ID" value="NM_001393988.1"/>
</dbReference>
<dbReference type="RefSeq" id="NP_036363.2">
    <molecule id="Q13029-1"/>
    <property type="nucleotide sequence ID" value="NM_012231.4"/>
</dbReference>
<dbReference type="RefSeq" id="NP_056950.2">
    <molecule id="Q13029-2"/>
    <property type="nucleotide sequence ID" value="NM_015866.4"/>
</dbReference>
<dbReference type="RefSeq" id="XP_016857744.1">
    <property type="nucleotide sequence ID" value="XM_017002255.1"/>
</dbReference>
<dbReference type="RefSeq" id="XP_016857745.1">
    <property type="nucleotide sequence ID" value="XM_017002256.1"/>
</dbReference>
<dbReference type="RefSeq" id="XP_016857746.1">
    <property type="nucleotide sequence ID" value="XM_017002257.1"/>
</dbReference>
<dbReference type="RefSeq" id="XP_016857748.1">
    <property type="nucleotide sequence ID" value="XM_017002259.1"/>
</dbReference>
<dbReference type="RefSeq" id="XP_016857749.1">
    <molecule id="Q13029-3"/>
    <property type="nucleotide sequence ID" value="XM_017002260.3"/>
</dbReference>
<dbReference type="RefSeq" id="XP_016857750.1">
    <molecule id="Q13029-3"/>
    <property type="nucleotide sequence ID" value="XM_017002261.3"/>
</dbReference>
<dbReference type="RefSeq" id="XP_016857751.1">
    <property type="nucleotide sequence ID" value="XM_017002262.1"/>
</dbReference>
<dbReference type="RefSeq" id="XP_016857752.1">
    <property type="nucleotide sequence ID" value="XM_017002263.1"/>
</dbReference>
<dbReference type="RefSeq" id="XP_047285953.1">
    <molecule id="Q13029-3"/>
    <property type="nucleotide sequence ID" value="XM_047429997.1"/>
</dbReference>
<dbReference type="RefSeq" id="XP_047285954.1">
    <molecule id="Q13029-5"/>
    <property type="nucleotide sequence ID" value="XM_047429998.1"/>
</dbReference>
<dbReference type="PDB" id="2JV0">
    <property type="method" value="NMR"/>
    <property type="chains" value="A=1-161"/>
</dbReference>
<dbReference type="PDB" id="2QPW">
    <property type="method" value="X-ray"/>
    <property type="resolution" value="1.79 A"/>
    <property type="chains" value="A=2-148"/>
</dbReference>
<dbReference type="PDBsum" id="2JV0"/>
<dbReference type="PDBsum" id="2QPW"/>
<dbReference type="SMR" id="Q13029"/>
<dbReference type="BioGRID" id="113575">
    <property type="interactions" value="40"/>
</dbReference>
<dbReference type="DIP" id="DIP-428N"/>
<dbReference type="FunCoup" id="Q13029">
    <property type="interactions" value="3620"/>
</dbReference>
<dbReference type="IntAct" id="Q13029">
    <property type="interactions" value="17"/>
</dbReference>
<dbReference type="STRING" id="9606.ENSP00000235372"/>
<dbReference type="ChEMBL" id="CHEMBL5214862"/>
<dbReference type="GlyGen" id="Q13029">
    <property type="glycosylation" value="4 sites, 1 N-linked glycan (1 site), 1 O-linked glycan (2 sites)"/>
</dbReference>
<dbReference type="iPTMnet" id="Q13029"/>
<dbReference type="PhosphoSitePlus" id="Q13029"/>
<dbReference type="SwissPalm" id="Q13029"/>
<dbReference type="BioMuta" id="PRDM2"/>
<dbReference type="DMDM" id="56757653"/>
<dbReference type="jPOST" id="Q13029"/>
<dbReference type="MassIVE" id="Q13029"/>
<dbReference type="PaxDb" id="9606-ENSP00000235372"/>
<dbReference type="PeptideAtlas" id="Q13029"/>
<dbReference type="ProteomicsDB" id="3002"/>
<dbReference type="ProteomicsDB" id="59110">
    <molecule id="Q13029-1"/>
</dbReference>
<dbReference type="ProteomicsDB" id="59111">
    <molecule id="Q13029-2"/>
</dbReference>
<dbReference type="ProteomicsDB" id="59112">
    <molecule id="Q13029-3"/>
</dbReference>
<dbReference type="ProteomicsDB" id="65150"/>
<dbReference type="Pumba" id="Q13029"/>
<dbReference type="Antibodypedia" id="1774">
    <property type="antibodies" value="267 antibodies from 25 providers"/>
</dbReference>
<dbReference type="DNASU" id="7799"/>
<dbReference type="Ensembl" id="ENST00000235372.11">
    <molecule id="Q13029-1"/>
    <property type="protein sequence ID" value="ENSP00000235372.6"/>
    <property type="gene ID" value="ENSG00000116731.23"/>
</dbReference>
<dbReference type="Ensembl" id="ENST00000311066.10">
    <molecule id="Q13029-1"/>
    <property type="protein sequence ID" value="ENSP00000312352.6"/>
    <property type="gene ID" value="ENSG00000116731.23"/>
</dbReference>
<dbReference type="Ensembl" id="ENST00000343137.8">
    <molecule id="Q13029-5"/>
    <property type="protein sequence ID" value="ENSP00000341621.4"/>
    <property type="gene ID" value="ENSG00000116731.23"/>
</dbReference>
<dbReference type="Ensembl" id="ENST00000376048.9">
    <molecule id="Q13029-4"/>
    <property type="protein sequence ID" value="ENSP00000365216.5"/>
    <property type="gene ID" value="ENSG00000116731.23"/>
</dbReference>
<dbReference type="Ensembl" id="ENST00000413440.5">
    <molecule id="Q13029-5"/>
    <property type="protein sequence ID" value="ENSP00000411103.1"/>
    <property type="gene ID" value="ENSG00000116731.23"/>
</dbReference>
<dbReference type="GeneID" id="7799"/>
<dbReference type="KEGG" id="hsa:7799"/>
<dbReference type="MANE-Select" id="ENST00000311066.10">
    <property type="protein sequence ID" value="ENSP00000312352.6"/>
    <property type="RefSeq nucleotide sequence ID" value="NM_001393986.1"/>
    <property type="RefSeq protein sequence ID" value="NP_001380915.1"/>
</dbReference>
<dbReference type="UCSC" id="uc001avg.4">
    <molecule id="Q13029-1"/>
    <property type="organism name" value="human"/>
</dbReference>
<dbReference type="AGR" id="HGNC:9347"/>
<dbReference type="CTD" id="7799"/>
<dbReference type="DisGeNET" id="7799"/>
<dbReference type="GeneCards" id="PRDM2"/>
<dbReference type="HGNC" id="HGNC:9347">
    <property type="gene designation" value="PRDM2"/>
</dbReference>
<dbReference type="HPA" id="ENSG00000116731">
    <property type="expression patterns" value="Low tissue specificity"/>
</dbReference>
<dbReference type="MIM" id="601196">
    <property type="type" value="gene"/>
</dbReference>
<dbReference type="neXtProt" id="NX_Q13029"/>
<dbReference type="OpenTargets" id="ENSG00000116731"/>
<dbReference type="PharmGKB" id="PA33715"/>
<dbReference type="VEuPathDB" id="HostDB:ENSG00000116731"/>
<dbReference type="eggNOG" id="KOG2461">
    <property type="taxonomic scope" value="Eukaryota"/>
</dbReference>
<dbReference type="GeneTree" id="ENSGT00940000159410"/>
<dbReference type="HOGENOM" id="CLU_002916_1_0_1"/>
<dbReference type="InParanoid" id="Q13029"/>
<dbReference type="OMA" id="MASRCPS"/>
<dbReference type="OrthoDB" id="6414306at2759"/>
<dbReference type="PAN-GO" id="Q13029">
    <property type="GO annotations" value="4 GO annotations based on evolutionary models"/>
</dbReference>
<dbReference type="PhylomeDB" id="Q13029"/>
<dbReference type="TreeFam" id="TF332173"/>
<dbReference type="BioCyc" id="MetaCyc:HS04042-MONOMER"/>
<dbReference type="PathwayCommons" id="Q13029"/>
<dbReference type="SignaLink" id="Q13029"/>
<dbReference type="SIGNOR" id="Q13029"/>
<dbReference type="BioGRID-ORCS" id="7799">
    <property type="hits" value="12 hits in 1189 CRISPR screens"/>
</dbReference>
<dbReference type="ChiTaRS" id="PRDM2">
    <property type="organism name" value="human"/>
</dbReference>
<dbReference type="EvolutionaryTrace" id="Q13029"/>
<dbReference type="GeneWiki" id="PRDM2"/>
<dbReference type="GenomeRNAi" id="7799"/>
<dbReference type="Pharos" id="Q13029">
    <property type="development level" value="Tbio"/>
</dbReference>
<dbReference type="PRO" id="PR:Q13029"/>
<dbReference type="Proteomes" id="UP000005640">
    <property type="component" value="Chromosome 1"/>
</dbReference>
<dbReference type="RNAct" id="Q13029">
    <property type="molecule type" value="protein"/>
</dbReference>
<dbReference type="Bgee" id="ENSG00000116731">
    <property type="expression patterns" value="Expressed in sural nerve and 203 other cell types or tissues"/>
</dbReference>
<dbReference type="ExpressionAtlas" id="Q13029">
    <property type="expression patterns" value="baseline and differential"/>
</dbReference>
<dbReference type="GO" id="GO:0005794">
    <property type="term" value="C:Golgi apparatus"/>
    <property type="evidence" value="ECO:0000314"/>
    <property type="project" value="HPA"/>
</dbReference>
<dbReference type="GO" id="GO:0005654">
    <property type="term" value="C:nucleoplasm"/>
    <property type="evidence" value="ECO:0000314"/>
    <property type="project" value="HPA"/>
</dbReference>
<dbReference type="GO" id="GO:0005634">
    <property type="term" value="C:nucleus"/>
    <property type="evidence" value="ECO:0000314"/>
    <property type="project" value="MGI"/>
</dbReference>
<dbReference type="GO" id="GO:0001228">
    <property type="term" value="F:DNA-binding transcription activator activity, RNA polymerase II-specific"/>
    <property type="evidence" value="ECO:0000314"/>
    <property type="project" value="NTNU_SB"/>
</dbReference>
<dbReference type="GO" id="GO:0003700">
    <property type="term" value="F:DNA-binding transcription factor activity"/>
    <property type="evidence" value="ECO:0000303"/>
    <property type="project" value="UniProtKB"/>
</dbReference>
<dbReference type="GO" id="GO:0000981">
    <property type="term" value="F:DNA-binding transcription factor activity, RNA polymerase II-specific"/>
    <property type="evidence" value="ECO:0000318"/>
    <property type="project" value="GO_Central"/>
</dbReference>
<dbReference type="GO" id="GO:0001227">
    <property type="term" value="F:DNA-binding transcription repressor activity, RNA polymerase II-specific"/>
    <property type="evidence" value="ECO:0000314"/>
    <property type="project" value="ARUK-UCL"/>
</dbReference>
<dbReference type="GO" id="GO:0140949">
    <property type="term" value="F:histone H3K9 trimethyltransferase activity"/>
    <property type="evidence" value="ECO:0007669"/>
    <property type="project" value="UniProtKB-EC"/>
</dbReference>
<dbReference type="GO" id="GO:0000977">
    <property type="term" value="F:RNA polymerase II transcription regulatory region sequence-specific DNA binding"/>
    <property type="evidence" value="ECO:0000315"/>
    <property type="project" value="NTNU_SB"/>
</dbReference>
<dbReference type="GO" id="GO:0043565">
    <property type="term" value="F:sequence-specific DNA binding"/>
    <property type="evidence" value="ECO:0000314"/>
    <property type="project" value="ARUK-UCL"/>
</dbReference>
<dbReference type="GO" id="GO:0008270">
    <property type="term" value="F:zinc ion binding"/>
    <property type="evidence" value="ECO:0000303"/>
    <property type="project" value="UniProtKB"/>
</dbReference>
<dbReference type="GO" id="GO:0008340">
    <property type="term" value="P:determination of adult lifespan"/>
    <property type="evidence" value="ECO:0007669"/>
    <property type="project" value="Ensembl"/>
</dbReference>
<dbReference type="GO" id="GO:0032259">
    <property type="term" value="P:methylation"/>
    <property type="evidence" value="ECO:0007669"/>
    <property type="project" value="UniProtKB-KW"/>
</dbReference>
<dbReference type="GO" id="GO:0000122">
    <property type="term" value="P:negative regulation of transcription by RNA polymerase II"/>
    <property type="evidence" value="ECO:0000314"/>
    <property type="project" value="ARUK-UCL"/>
</dbReference>
<dbReference type="GO" id="GO:0045944">
    <property type="term" value="P:positive regulation of transcription by RNA polymerase II"/>
    <property type="evidence" value="ECO:0000314"/>
    <property type="project" value="NTNU_SB"/>
</dbReference>
<dbReference type="GO" id="GO:0006355">
    <property type="term" value="P:regulation of DNA-templated transcription"/>
    <property type="evidence" value="ECO:0000303"/>
    <property type="project" value="UniProtKB"/>
</dbReference>
<dbReference type="GO" id="GO:0006357">
    <property type="term" value="P:regulation of transcription by RNA polymerase II"/>
    <property type="evidence" value="ECO:0000318"/>
    <property type="project" value="GO_Central"/>
</dbReference>
<dbReference type="CDD" id="cd19188">
    <property type="entry name" value="PR-SET_PRDM2"/>
    <property type="match status" value="1"/>
</dbReference>
<dbReference type="DisProt" id="DP01757"/>
<dbReference type="FunFam" id="2.170.270.10:FF:000026">
    <property type="entry name" value="PR domain zinc finger protein 2"/>
    <property type="match status" value="1"/>
</dbReference>
<dbReference type="FunFam" id="3.30.160.60:FF:000724">
    <property type="entry name" value="PR domain zinc finger protein 2"/>
    <property type="match status" value="1"/>
</dbReference>
<dbReference type="FunFam" id="3.30.160.60:FF:002781">
    <property type="entry name" value="PR/SET domain 2"/>
    <property type="match status" value="1"/>
</dbReference>
<dbReference type="Gene3D" id="3.30.160.60">
    <property type="entry name" value="Classic Zinc Finger"/>
    <property type="match status" value="3"/>
</dbReference>
<dbReference type="Gene3D" id="2.170.270.10">
    <property type="entry name" value="SET domain"/>
    <property type="match status" value="1"/>
</dbReference>
<dbReference type="IDEAL" id="IID00467"/>
<dbReference type="InterPro" id="IPR009170">
    <property type="entry name" value="PRDM2"/>
</dbReference>
<dbReference type="InterPro" id="IPR044414">
    <property type="entry name" value="PRDM2_PR-SET"/>
</dbReference>
<dbReference type="InterPro" id="IPR001214">
    <property type="entry name" value="SET_dom"/>
</dbReference>
<dbReference type="InterPro" id="IPR046341">
    <property type="entry name" value="SET_dom_sf"/>
</dbReference>
<dbReference type="InterPro" id="IPR050331">
    <property type="entry name" value="Zinc_finger"/>
</dbReference>
<dbReference type="InterPro" id="IPR036236">
    <property type="entry name" value="Znf_C2H2_sf"/>
</dbReference>
<dbReference type="InterPro" id="IPR013087">
    <property type="entry name" value="Znf_C2H2_type"/>
</dbReference>
<dbReference type="PANTHER" id="PTHR16515">
    <property type="entry name" value="PR DOMAIN ZINC FINGER PROTEIN"/>
    <property type="match status" value="1"/>
</dbReference>
<dbReference type="PANTHER" id="PTHR16515:SF37">
    <property type="entry name" value="PR DOMAIN ZINC FINGER PROTEIN 2"/>
    <property type="match status" value="1"/>
</dbReference>
<dbReference type="Pfam" id="PF21549">
    <property type="entry name" value="PRDM2_PR"/>
    <property type="match status" value="1"/>
</dbReference>
<dbReference type="Pfam" id="PF00096">
    <property type="entry name" value="zf-C2H2"/>
    <property type="match status" value="2"/>
</dbReference>
<dbReference type="Pfam" id="PF13912">
    <property type="entry name" value="zf-C2H2_6"/>
    <property type="match status" value="2"/>
</dbReference>
<dbReference type="PIRSF" id="PIRSF002395">
    <property type="entry name" value="RIZ_SET"/>
    <property type="match status" value="1"/>
</dbReference>
<dbReference type="SMART" id="SM00317">
    <property type="entry name" value="SET"/>
    <property type="match status" value="1"/>
</dbReference>
<dbReference type="SMART" id="SM00355">
    <property type="entry name" value="ZnF_C2H2"/>
    <property type="match status" value="8"/>
</dbReference>
<dbReference type="SUPFAM" id="SSF57667">
    <property type="entry name" value="beta-beta-alpha zinc fingers"/>
    <property type="match status" value="2"/>
</dbReference>
<dbReference type="SUPFAM" id="SSF82199">
    <property type="entry name" value="SET domain"/>
    <property type="match status" value="1"/>
</dbReference>
<dbReference type="PROSITE" id="PS50280">
    <property type="entry name" value="SET"/>
    <property type="match status" value="1"/>
</dbReference>
<dbReference type="PROSITE" id="PS00028">
    <property type="entry name" value="ZINC_FINGER_C2H2_1"/>
    <property type="match status" value="6"/>
</dbReference>
<dbReference type="PROSITE" id="PS50157">
    <property type="entry name" value="ZINC_FINGER_C2H2_2"/>
    <property type="match status" value="7"/>
</dbReference>
<gene>
    <name type="primary">PRDM2</name>
    <name type="synonym">KMT8</name>
    <name type="synonym">RIZ</name>
</gene>
<proteinExistence type="evidence at protein level"/>
<comment type="function">
    <text evidence="6">S-adenosyl-L-methionine-dependent histone methyltransferase that specifically methylates 'Lys-9' of histone H3. May function as a DNA-binding transcription factor. Binds to the macrophage-specific TPA-responsive element (MTE) of the HMOX1 (heme oxygenase 1) gene and may act as a transcriptional activator of this gene.</text>
</comment>
<comment type="catalytic activity">
    <reaction>
        <text>L-lysyl(9)-[histone H3] + 3 S-adenosyl-L-methionine = N(6),N(6),N(6)-trimethyl-L-lysyl(9)-[histone H3] + 3 S-adenosyl-L-homocysteine + 3 H(+)</text>
        <dbReference type="Rhea" id="RHEA:60276"/>
        <dbReference type="Rhea" id="RHEA-COMP:15538"/>
        <dbReference type="Rhea" id="RHEA-COMP:15546"/>
        <dbReference type="ChEBI" id="CHEBI:15378"/>
        <dbReference type="ChEBI" id="CHEBI:29969"/>
        <dbReference type="ChEBI" id="CHEBI:57856"/>
        <dbReference type="ChEBI" id="CHEBI:59789"/>
        <dbReference type="ChEBI" id="CHEBI:61961"/>
        <dbReference type="EC" id="2.1.1.355"/>
    </reaction>
</comment>
<comment type="subunit">
    <text evidence="7 9">Binds to the retinoblastoma protein (RB). Interacts with GATA3.</text>
</comment>
<comment type="subcellular location">
    <subcellularLocation>
        <location evidence="6 8 11">Nucleus</location>
    </subcellularLocation>
</comment>
<comment type="alternative products">
    <event type="alternative splicing"/>
    <event type="alternative initiation"/>
    <isoform>
        <id>Q13029-1</id>
        <name>1</name>
        <name>RIZ1</name>
        <sequence type="displayed"/>
    </isoform>
    <isoform>
        <id>Q13029-2</id>
        <name>2</name>
        <name>MTB-Zf</name>
        <sequence type="described" ref="VSP_006927 VSP_006928"/>
    </isoform>
    <isoform>
        <id>Q13029-3</id>
        <name>3</name>
        <name>RIZ2</name>
        <sequence type="described" ref="VSP_018974"/>
    </isoform>
    <isoform>
        <id>Q13029-4</id>
        <name>4</name>
        <sequence type="described" ref="VSP_046421 VSP_046422"/>
    </isoform>
    <isoform>
        <id>Q13029-5</id>
        <name>5</name>
        <sequence type="described" ref="VSP_018974 VSP_006927 VSP_006928"/>
    </isoform>
</comment>
<comment type="tissue specificity">
    <text evidence="10 11">Highly expressed in retinoblastoma cell lines and in brain tumors. Also expressed in a number of other cell lines and in brain, heart, skeletal muscle, liver and spleen. Isoform 1 is expressed in testis at much higher level than isoform 3.</text>
</comment>
<comment type="miscellaneous">
    <molecule>Isoform 3</molecule>
    <text evidence="15">Produced by alternative initiation at Met-202 of isoform 1.</text>
</comment>
<comment type="similarity">
    <text evidence="4">Belongs to the class V-like SAM-binding methyltransferase superfamily.</text>
</comment>
<comment type="sequence caution" evidence="15">
    <conflict type="erroneous initiation">
        <sequence resource="EMBL-CDS" id="BAA08110"/>
    </conflict>
    <text>Truncated N-terminus.</text>
</comment>
<comment type="online information" name="Atlas of Genetics and Cytogenetics in Oncology and Haematology">
    <link uri="https://atlasgeneticsoncology.org/gene/41834/PRDM2"/>
</comment>
<accession>Q13029</accession>
<accession>B1AJZ4</accession>
<accession>B5MC68</accession>
<accession>Q13149</accession>
<accession>Q14550</accession>
<accession>Q5THJ1</accession>
<accession>Q5VUL9</accession>
<evidence type="ECO:0000250" key="1">
    <source>
        <dbReference type="UniProtKB" id="Q63755"/>
    </source>
</evidence>
<evidence type="ECO:0000255" key="2"/>
<evidence type="ECO:0000255" key="3">
    <source>
        <dbReference type="PROSITE-ProRule" id="PRU00042"/>
    </source>
</evidence>
<evidence type="ECO:0000255" key="4">
    <source>
        <dbReference type="PROSITE-ProRule" id="PRU00190"/>
    </source>
</evidence>
<evidence type="ECO:0000256" key="5">
    <source>
        <dbReference type="SAM" id="MobiDB-lite"/>
    </source>
</evidence>
<evidence type="ECO:0000269" key="6">
    <source>
    </source>
</evidence>
<evidence type="ECO:0000269" key="7">
    <source>
    </source>
</evidence>
<evidence type="ECO:0000269" key="8">
    <source>
    </source>
</evidence>
<evidence type="ECO:0000269" key="9">
    <source>
    </source>
</evidence>
<evidence type="ECO:0000269" key="10">
    <source>
    </source>
</evidence>
<evidence type="ECO:0000269" key="11">
    <source>
    </source>
</evidence>
<evidence type="ECO:0000303" key="12">
    <source>
    </source>
</evidence>
<evidence type="ECO:0000303" key="13">
    <source>
    </source>
</evidence>
<evidence type="ECO:0000303" key="14">
    <source>
    </source>
</evidence>
<evidence type="ECO:0000305" key="15"/>
<evidence type="ECO:0007744" key="16">
    <source>
    </source>
</evidence>
<evidence type="ECO:0007744" key="17">
    <source>
    </source>
</evidence>
<evidence type="ECO:0007744" key="18">
    <source>
    </source>
</evidence>
<evidence type="ECO:0007829" key="19">
    <source>
        <dbReference type="PDB" id="2JV0"/>
    </source>
</evidence>
<evidence type="ECO:0007829" key="20">
    <source>
        <dbReference type="PDB" id="2QPW"/>
    </source>
</evidence>